<proteinExistence type="inferred from homology"/>
<comment type="similarity">
    <text evidence="1">Belongs to the bacterial ribosomal protein bL34 family.</text>
</comment>
<name>RL34_ERWT9</name>
<gene>
    <name evidence="1" type="primary">rpmH</name>
    <name type="ordered locus">ETA_34540</name>
</gene>
<organism>
    <name type="scientific">Erwinia tasmaniensis (strain DSM 17950 / CFBP 7177 / CIP 109463 / NCPPB 4357 / Et1/99)</name>
    <dbReference type="NCBI Taxonomy" id="465817"/>
    <lineage>
        <taxon>Bacteria</taxon>
        <taxon>Pseudomonadati</taxon>
        <taxon>Pseudomonadota</taxon>
        <taxon>Gammaproteobacteria</taxon>
        <taxon>Enterobacterales</taxon>
        <taxon>Erwiniaceae</taxon>
        <taxon>Erwinia</taxon>
    </lineage>
</organism>
<feature type="chain" id="PRO_1000196041" description="Large ribosomal subunit protein bL34">
    <location>
        <begin position="1"/>
        <end position="46"/>
    </location>
</feature>
<feature type="region of interest" description="Disordered" evidence="2">
    <location>
        <begin position="1"/>
        <end position="46"/>
    </location>
</feature>
<feature type="compositionally biased region" description="Basic residues" evidence="2">
    <location>
        <begin position="31"/>
        <end position="40"/>
    </location>
</feature>
<evidence type="ECO:0000255" key="1">
    <source>
        <dbReference type="HAMAP-Rule" id="MF_00391"/>
    </source>
</evidence>
<evidence type="ECO:0000256" key="2">
    <source>
        <dbReference type="SAM" id="MobiDB-lite"/>
    </source>
</evidence>
<evidence type="ECO:0000305" key="3"/>
<protein>
    <recommendedName>
        <fullName evidence="1">Large ribosomal subunit protein bL34</fullName>
    </recommendedName>
    <alternativeName>
        <fullName evidence="3">50S ribosomal protein L34</fullName>
    </alternativeName>
</protein>
<keyword id="KW-1185">Reference proteome</keyword>
<keyword id="KW-0687">Ribonucleoprotein</keyword>
<keyword id="KW-0689">Ribosomal protein</keyword>
<reference key="1">
    <citation type="journal article" date="2008" name="Environ. Microbiol.">
        <title>The genome of Erwinia tasmaniensis strain Et1/99, a non-pathogenic bacterium in the genus Erwinia.</title>
        <authorList>
            <person name="Kube M."/>
            <person name="Migdoll A.M."/>
            <person name="Mueller I."/>
            <person name="Kuhl H."/>
            <person name="Beck A."/>
            <person name="Reinhardt R."/>
            <person name="Geider K."/>
        </authorList>
    </citation>
    <scope>NUCLEOTIDE SEQUENCE [LARGE SCALE GENOMIC DNA]</scope>
    <source>
        <strain>DSM 17950 / CFBP 7177 / CIP 109463 / NCPPB 4357 / Et1/99</strain>
    </source>
</reference>
<accession>B2VCE4</accession>
<sequence>MKRTFQPSVLKRNRSHGFRARMANKNGRQVLARRRAKGRSRLTVSK</sequence>
<dbReference type="EMBL" id="CU468135">
    <property type="protein sequence ID" value="CAO98500.1"/>
    <property type="molecule type" value="Genomic_DNA"/>
</dbReference>
<dbReference type="RefSeq" id="WP_003023858.1">
    <property type="nucleotide sequence ID" value="NC_010694.1"/>
</dbReference>
<dbReference type="SMR" id="B2VCE4"/>
<dbReference type="STRING" id="465817.ETA_34540"/>
<dbReference type="GeneID" id="97604316"/>
<dbReference type="KEGG" id="eta:ETA_34540"/>
<dbReference type="eggNOG" id="COG0230">
    <property type="taxonomic scope" value="Bacteria"/>
</dbReference>
<dbReference type="HOGENOM" id="CLU_129938_2_1_6"/>
<dbReference type="OrthoDB" id="9804164at2"/>
<dbReference type="Proteomes" id="UP000001726">
    <property type="component" value="Chromosome"/>
</dbReference>
<dbReference type="GO" id="GO:1990904">
    <property type="term" value="C:ribonucleoprotein complex"/>
    <property type="evidence" value="ECO:0007669"/>
    <property type="project" value="UniProtKB-KW"/>
</dbReference>
<dbReference type="GO" id="GO:0005840">
    <property type="term" value="C:ribosome"/>
    <property type="evidence" value="ECO:0007669"/>
    <property type="project" value="UniProtKB-KW"/>
</dbReference>
<dbReference type="GO" id="GO:0003735">
    <property type="term" value="F:structural constituent of ribosome"/>
    <property type="evidence" value="ECO:0007669"/>
    <property type="project" value="InterPro"/>
</dbReference>
<dbReference type="GO" id="GO:0006412">
    <property type="term" value="P:translation"/>
    <property type="evidence" value="ECO:0007669"/>
    <property type="project" value="UniProtKB-UniRule"/>
</dbReference>
<dbReference type="FunFam" id="1.10.287.3980:FF:000001">
    <property type="entry name" value="Mitochondrial ribosomal protein L34"/>
    <property type="match status" value="1"/>
</dbReference>
<dbReference type="Gene3D" id="1.10.287.3980">
    <property type="match status" value="1"/>
</dbReference>
<dbReference type="HAMAP" id="MF_00391">
    <property type="entry name" value="Ribosomal_bL34"/>
    <property type="match status" value="1"/>
</dbReference>
<dbReference type="InterPro" id="IPR000271">
    <property type="entry name" value="Ribosomal_bL34"/>
</dbReference>
<dbReference type="InterPro" id="IPR020939">
    <property type="entry name" value="Ribosomal_bL34_CS"/>
</dbReference>
<dbReference type="NCBIfam" id="TIGR01030">
    <property type="entry name" value="rpmH_bact"/>
    <property type="match status" value="1"/>
</dbReference>
<dbReference type="PANTHER" id="PTHR14503:SF4">
    <property type="entry name" value="LARGE RIBOSOMAL SUBUNIT PROTEIN BL34M"/>
    <property type="match status" value="1"/>
</dbReference>
<dbReference type="PANTHER" id="PTHR14503">
    <property type="entry name" value="MITOCHONDRIAL RIBOSOMAL PROTEIN 34 FAMILY MEMBER"/>
    <property type="match status" value="1"/>
</dbReference>
<dbReference type="Pfam" id="PF00468">
    <property type="entry name" value="Ribosomal_L34"/>
    <property type="match status" value="1"/>
</dbReference>
<dbReference type="PROSITE" id="PS00784">
    <property type="entry name" value="RIBOSOMAL_L34"/>
    <property type="match status" value="1"/>
</dbReference>